<comment type="function">
    <text evidence="1">Part of a heterodimeric complex that catalyzes the two-step biosynthesis of 4-amino-4-deoxychorismate (ADC), a precursor of p-aminobenzoate (PABA) and tetrahydrofolate. In the first step, a glutamine amidotransferase (PabA) generates ammonia as a substrate that, along with chorismate, is used in the second step, catalyzed by aminodeoxychorismate synthase (PabB) to produce ADC. PabA converts glutamine into glutamate only in the presence of stoichiometric amounts of PabB (By similarity).</text>
</comment>
<comment type="catalytic activity">
    <reaction>
        <text>chorismate + L-glutamine = 4-amino-4-deoxychorismate + L-glutamate</text>
        <dbReference type="Rhea" id="RHEA:11672"/>
        <dbReference type="ChEBI" id="CHEBI:29748"/>
        <dbReference type="ChEBI" id="CHEBI:29985"/>
        <dbReference type="ChEBI" id="CHEBI:58359"/>
        <dbReference type="ChEBI" id="CHEBI:58406"/>
        <dbReference type="EC" id="2.6.1.85"/>
    </reaction>
</comment>
<comment type="pathway">
    <text>Cofactor biosynthesis; tetrahydrofolate biosynthesis; 4-aminobenzoate from chorismate: step 1/2.</text>
</comment>
<comment type="subunit">
    <text evidence="1">Monomer. Heterodimer consisting of two non-identical subunits: a glutamine amidotransferase subunit (PabA) and a aminodeoxychorismate synthase subunit (PabB) (By similarity).</text>
</comment>
<dbReference type="EC" id="2.6.1.85"/>
<dbReference type="EMBL" id="X02605">
    <property type="protein sequence ID" value="CAA26452.1"/>
    <property type="molecule type" value="Genomic_DNA"/>
</dbReference>
<dbReference type="PIR" id="S09635">
    <property type="entry name" value="S09635"/>
</dbReference>
<dbReference type="SMR" id="P06195"/>
<dbReference type="STRING" id="273526.SMDB11_3831"/>
<dbReference type="MEROPS" id="C26.955"/>
<dbReference type="UniPathway" id="UPA00077">
    <property type="reaction ID" value="UER00149"/>
</dbReference>
<dbReference type="GO" id="GO:0005829">
    <property type="term" value="C:cytosol"/>
    <property type="evidence" value="ECO:0007669"/>
    <property type="project" value="TreeGrafter"/>
</dbReference>
<dbReference type="GO" id="GO:0046820">
    <property type="term" value="F:4-amino-4-deoxychorismate synthase activity"/>
    <property type="evidence" value="ECO:0000250"/>
    <property type="project" value="UniProtKB"/>
</dbReference>
<dbReference type="GO" id="GO:0004049">
    <property type="term" value="F:anthranilate synthase activity"/>
    <property type="evidence" value="ECO:0007669"/>
    <property type="project" value="TreeGrafter"/>
</dbReference>
<dbReference type="GO" id="GO:0046656">
    <property type="term" value="P:folic acid biosynthetic process"/>
    <property type="evidence" value="ECO:0007669"/>
    <property type="project" value="UniProtKB-KW"/>
</dbReference>
<dbReference type="GO" id="GO:0000162">
    <property type="term" value="P:L-tryptophan biosynthetic process"/>
    <property type="evidence" value="ECO:0007669"/>
    <property type="project" value="TreeGrafter"/>
</dbReference>
<dbReference type="GO" id="GO:0046654">
    <property type="term" value="P:tetrahydrofolate biosynthetic process"/>
    <property type="evidence" value="ECO:0000250"/>
    <property type="project" value="UniProtKB"/>
</dbReference>
<dbReference type="CDD" id="cd01743">
    <property type="entry name" value="GATase1_Anthranilate_Synthase"/>
    <property type="match status" value="1"/>
</dbReference>
<dbReference type="FunFam" id="3.40.50.880:FF:000003">
    <property type="entry name" value="Anthranilate synthase component II"/>
    <property type="match status" value="1"/>
</dbReference>
<dbReference type="Gene3D" id="3.40.50.880">
    <property type="match status" value="1"/>
</dbReference>
<dbReference type="InterPro" id="IPR050472">
    <property type="entry name" value="Anth_synth/Amidotransfase"/>
</dbReference>
<dbReference type="InterPro" id="IPR029062">
    <property type="entry name" value="Class_I_gatase-like"/>
</dbReference>
<dbReference type="InterPro" id="IPR017926">
    <property type="entry name" value="GATASE"/>
</dbReference>
<dbReference type="InterPro" id="IPR006221">
    <property type="entry name" value="TrpG/PapA_dom"/>
</dbReference>
<dbReference type="NCBIfam" id="NF005271">
    <property type="entry name" value="PRK06774.1"/>
    <property type="match status" value="1"/>
</dbReference>
<dbReference type="NCBIfam" id="NF005946">
    <property type="entry name" value="PRK08007.1"/>
    <property type="match status" value="1"/>
</dbReference>
<dbReference type="NCBIfam" id="NF006462">
    <property type="entry name" value="PRK08857.1"/>
    <property type="match status" value="1"/>
</dbReference>
<dbReference type="NCBIfam" id="TIGR00566">
    <property type="entry name" value="trpG_papA"/>
    <property type="match status" value="1"/>
</dbReference>
<dbReference type="PANTHER" id="PTHR43418:SF4">
    <property type="entry name" value="MULTIFUNCTIONAL TRYPTOPHAN BIOSYNTHESIS PROTEIN"/>
    <property type="match status" value="1"/>
</dbReference>
<dbReference type="PANTHER" id="PTHR43418">
    <property type="entry name" value="MULTIFUNCTIONAL TRYPTOPHAN BIOSYNTHESIS PROTEIN-RELATED"/>
    <property type="match status" value="1"/>
</dbReference>
<dbReference type="Pfam" id="PF00117">
    <property type="entry name" value="GATase"/>
    <property type="match status" value="1"/>
</dbReference>
<dbReference type="PRINTS" id="PR00097">
    <property type="entry name" value="ANTSNTHASEII"/>
</dbReference>
<dbReference type="PRINTS" id="PR00099">
    <property type="entry name" value="CPSGATASE"/>
</dbReference>
<dbReference type="PRINTS" id="PR00096">
    <property type="entry name" value="GATASE"/>
</dbReference>
<dbReference type="SUPFAM" id="SSF52317">
    <property type="entry name" value="Class I glutamine amidotransferase-like"/>
    <property type="match status" value="1"/>
</dbReference>
<dbReference type="PROSITE" id="PS51273">
    <property type="entry name" value="GATASE_TYPE_1"/>
    <property type="match status" value="1"/>
</dbReference>
<protein>
    <recommendedName>
        <fullName>Aminodeoxychorismate synthase component 2</fullName>
        <shortName>ADC synthase</shortName>
        <shortName>ADCS</shortName>
        <ecNumber>2.6.1.85</ecNumber>
    </recommendedName>
    <alternativeName>
        <fullName>4-amino-4-deoxychorismate synthase component 2</fullName>
    </alternativeName>
    <alternativeName>
        <fullName>Aminodeoxychorismate synthase, glutamine amidotransferase component</fullName>
    </alternativeName>
</protein>
<keyword id="KW-0289">Folate biosynthesis</keyword>
<keyword id="KW-0315">Glutamine amidotransferase</keyword>
<keyword id="KW-0808">Transferase</keyword>
<feature type="chain" id="PRO_0000056852" description="Aminodeoxychorismate synthase component 2">
    <location>
        <begin position="1"/>
        <end position="191"/>
    </location>
</feature>
<feature type="domain" description="Glutamine amidotransferase type-1" evidence="2">
    <location>
        <begin position="1"/>
        <end position="191"/>
    </location>
</feature>
<feature type="active site" evidence="2">
    <location>
        <position position="79"/>
    </location>
</feature>
<feature type="active site" evidence="2">
    <location>
        <position position="172"/>
    </location>
</feature>
<feature type="active site" evidence="2">
    <location>
        <position position="174"/>
    </location>
</feature>
<proteinExistence type="inferred from homology"/>
<evidence type="ECO:0000250" key="1"/>
<evidence type="ECO:0000255" key="2">
    <source>
        <dbReference type="PROSITE-ProRule" id="PRU00605"/>
    </source>
</evidence>
<accession>P06195</accession>
<name>PABA_SERMA</name>
<reference key="1">
    <citation type="journal article" date="1985" name="J. Mol. Biol.">
        <title>Evolution of glutamine amidotransferase genes. Nucleotide sequences of the pabA genes from Salmonella typhimurium, Klebsiella aerogenes and Serratia marcescens.</title>
        <authorList>
            <person name="Kaplan J.B."/>
            <person name="Merkel W.K."/>
            <person name="Nichols B.P."/>
        </authorList>
    </citation>
    <scope>NUCLEOTIDE SEQUENCE [GENOMIC DNA]</scope>
</reference>
<sequence>MLLLIDNYDSFTYNLYQYFCELGAEVVVKRNDELQLTDIERLAPQHLVISPGPCTPNEAGISVAAIRHFAGKLPILGVCLGHQALGQAFGAEVVRARAVMHGKTSAIRHLGVGVFRGLSDPLTVTRYHSLVLKADTLPDCFEVTAWSERDGVRDEIMGIRHRALALEGVQFHPESVLSEQGHQLLDNFLNR</sequence>
<organism>
    <name type="scientific">Serratia marcescens</name>
    <dbReference type="NCBI Taxonomy" id="615"/>
    <lineage>
        <taxon>Bacteria</taxon>
        <taxon>Pseudomonadati</taxon>
        <taxon>Pseudomonadota</taxon>
        <taxon>Gammaproteobacteria</taxon>
        <taxon>Enterobacterales</taxon>
        <taxon>Yersiniaceae</taxon>
        <taxon>Serratia</taxon>
    </lineage>
</organism>
<gene>
    <name type="primary">pabA</name>
</gene>